<comment type="function">
    <text evidence="3 6">Short chain dehydrogenase/reductase; part of the gene cluster that mediates the biosynthesis of diterpenoid pyrones (PubMed:32286350). The first step of the pathway is the synthesis of the alpha-pyrone moiety by the polyketide synthase dpmpA via condensation of one acetyl-CoA starter unit with 3 malonyl-CoA units and 2 methylations (Probable). The alpha-pyrone is then combined with geranylgeranyl pyrophosphate (GGPP) formed by the GGPP synthase dpmpD through the action of the prenyltransferase dpmpC to yield a linear alpha-pyrone diterpenoid (Probable). Subsequent steps in the diterpenoid pyrone biosynthetic pathway involve the decalin core formation, which is initiated by the epoxidation of the C10-C11 olefin by the FAD-dependent oxidoreductase dpmpE, and is followed by a cyclization cascade catalyzed by the terpene cyclase dpmpB (Probable). The short chain dehydrogenase/reductase dpmpG then oxidizes the 8S hydroxy group to a ketone and the short chain dehydrogenase/reductase dpmpH reduces the ketone to the 8R hydroxy group to yield higginsianin B (PubMed:32286350). Higginsianin B is further methylated by the methyltransferase dpmpI to produce the intermediate named FDDP B (PubMed:32286350). The cytochrome P450 monooxygenase dpmpJ then oxidizes the C-26 methyl to primary alcohol, producing the final diterpenoid pyrone with a C-26 primary alcohol on the gamma-pyrone moiety named FDDP C (PubMed:32286350).</text>
</comment>
<comment type="pathway">
    <text evidence="3">Secondary metabolite biosynthesis; terpenoid biosynthesis.</text>
</comment>
<comment type="biotechnology">
    <text evidence="3">Diterpenoid pyrones display various biological activities and FDDP C shows anti-cancer and anti-HIV activities (PubMed:32286350). FDDP C also shows inhibitory activity of 42-mer-amyloid beta aggregation that is involved in the pathogenesis of Alzheimer's disease (PubMed:32286350).</text>
</comment>
<comment type="similarity">
    <text evidence="5">Belongs to the short-chain dehydrogenases/reductases (SDR) family.</text>
</comment>
<keyword id="KW-0521">NADP</keyword>
<keyword id="KW-0560">Oxidoreductase</keyword>
<keyword id="KW-1185">Reference proteome</keyword>
<dbReference type="EC" id="1.1.1.-" evidence="3"/>
<dbReference type="EMBL" id="AHHD01000387">
    <property type="protein sequence ID" value="EKG13732.1"/>
    <property type="molecule type" value="Genomic_DNA"/>
</dbReference>
<dbReference type="SMR" id="K2RLM6"/>
<dbReference type="STRING" id="1126212.K2RLM6"/>
<dbReference type="VEuPathDB" id="FungiDB:MPH_09198"/>
<dbReference type="eggNOG" id="KOG0725">
    <property type="taxonomic scope" value="Eukaryota"/>
</dbReference>
<dbReference type="HOGENOM" id="CLU_010194_2_19_1"/>
<dbReference type="InParanoid" id="K2RLM6"/>
<dbReference type="OrthoDB" id="417891at2759"/>
<dbReference type="UniPathway" id="UPA00213"/>
<dbReference type="Proteomes" id="UP000007129">
    <property type="component" value="Unassembled WGS sequence"/>
</dbReference>
<dbReference type="GO" id="GO:0016616">
    <property type="term" value="F:oxidoreductase activity, acting on the CH-OH group of donors, NAD or NADP as acceptor"/>
    <property type="evidence" value="ECO:0007669"/>
    <property type="project" value="TreeGrafter"/>
</dbReference>
<dbReference type="GO" id="GO:0048038">
    <property type="term" value="F:quinone binding"/>
    <property type="evidence" value="ECO:0007669"/>
    <property type="project" value="TreeGrafter"/>
</dbReference>
<dbReference type="GO" id="GO:0006633">
    <property type="term" value="P:fatty acid biosynthetic process"/>
    <property type="evidence" value="ECO:0007669"/>
    <property type="project" value="TreeGrafter"/>
</dbReference>
<dbReference type="GO" id="GO:0016114">
    <property type="term" value="P:terpenoid biosynthetic process"/>
    <property type="evidence" value="ECO:0007669"/>
    <property type="project" value="UniProtKB-UniPathway"/>
</dbReference>
<dbReference type="CDD" id="cd05233">
    <property type="entry name" value="SDR_c"/>
    <property type="match status" value="1"/>
</dbReference>
<dbReference type="Gene3D" id="3.40.50.720">
    <property type="entry name" value="NAD(P)-binding Rossmann-like Domain"/>
    <property type="match status" value="1"/>
</dbReference>
<dbReference type="InterPro" id="IPR036291">
    <property type="entry name" value="NAD(P)-bd_dom_sf"/>
</dbReference>
<dbReference type="InterPro" id="IPR002347">
    <property type="entry name" value="SDR_fam"/>
</dbReference>
<dbReference type="PANTHER" id="PTHR42760:SF127">
    <property type="entry name" value="3-KETOACYL-ACYL CARRIER PROTEIN REDUCTASE-RELATED"/>
    <property type="match status" value="1"/>
</dbReference>
<dbReference type="PANTHER" id="PTHR42760">
    <property type="entry name" value="SHORT-CHAIN DEHYDROGENASES/REDUCTASES FAMILY MEMBER"/>
    <property type="match status" value="1"/>
</dbReference>
<dbReference type="Pfam" id="PF00106">
    <property type="entry name" value="adh_short"/>
    <property type="match status" value="1"/>
</dbReference>
<dbReference type="PRINTS" id="PR00081">
    <property type="entry name" value="GDHRDH"/>
</dbReference>
<dbReference type="SUPFAM" id="SSF51735">
    <property type="entry name" value="NAD(P)-binding Rossmann-fold domains"/>
    <property type="match status" value="1"/>
</dbReference>
<reference key="1">
    <citation type="journal article" date="2012" name="BMC Genomics">
        <title>Tools to kill: Genome of one of the most destructive plant pathogenic fungi Macrophomina phaseolina.</title>
        <authorList>
            <person name="Islam M.S."/>
            <person name="Haque M.S."/>
            <person name="Islam M.M."/>
            <person name="Emdad E.M."/>
            <person name="Halim A."/>
            <person name="Hossen Q.M.M."/>
            <person name="Hossain M.Z."/>
            <person name="Ahmed B."/>
            <person name="Rahim S."/>
            <person name="Rahman M.S."/>
            <person name="Alam M.M."/>
            <person name="Hou S."/>
            <person name="Wan X."/>
            <person name="Saito J.A."/>
            <person name="Alam M."/>
        </authorList>
    </citation>
    <scope>NUCLEOTIDE SEQUENCE [LARGE SCALE GENOMIC DNA]</scope>
    <source>
        <strain>MS6</strain>
    </source>
</reference>
<reference key="2">
    <citation type="journal article" date="2020" name="Nat. Commun.">
        <title>Synthetic biology based construction of biological activity-related library of fungal decalin-containing diterpenoid pyrones.</title>
        <authorList>
            <person name="Tsukada K."/>
            <person name="Shinki S."/>
            <person name="Kaneko A."/>
            <person name="Murakami K."/>
            <person name="Irie K."/>
            <person name="Murai M."/>
            <person name="Miyoshi H."/>
            <person name="Dan S."/>
            <person name="Kawaji K."/>
            <person name="Hayashi H."/>
            <person name="Kodama E.N."/>
            <person name="Hori A."/>
            <person name="Salim E."/>
            <person name="Kuraishi T."/>
            <person name="Hirata N."/>
            <person name="Kanda Y."/>
            <person name="Asai T."/>
        </authorList>
    </citation>
    <scope>FUNCTION</scope>
    <scope>CATALYTIC ACTIVITY</scope>
    <scope>PATHWAY</scope>
    <scope>BIOTECHNOLOGY</scope>
</reference>
<accession>K2RLM6</accession>
<protein>
    <recommendedName>
        <fullName evidence="4">Short chain dehydrogenase/reductase dpmpG</fullName>
        <ecNumber evidence="3">1.1.1.-</ecNumber>
    </recommendedName>
    <alternativeName>
        <fullName evidence="4">Diterpenoid pyrone biosynthesis cluster protein G</fullName>
    </alternativeName>
</protein>
<feature type="chain" id="PRO_0000451550" description="Short chain dehydrogenase/reductase dpmpG">
    <location>
        <begin position="1"/>
        <end position="175"/>
    </location>
</feature>
<feature type="binding site" evidence="1">
    <location>
        <position position="18"/>
    </location>
    <ligand>
        <name>NADP(+)</name>
        <dbReference type="ChEBI" id="CHEBI:58349"/>
    </ligand>
</feature>
<feature type="binding site" evidence="1">
    <location>
        <position position="71"/>
    </location>
    <ligand>
        <name>NADP(+)</name>
        <dbReference type="ChEBI" id="CHEBI:58349"/>
    </ligand>
</feature>
<feature type="binding site" evidence="2">
    <location>
        <position position="98"/>
    </location>
    <ligand>
        <name>NADP(+)</name>
        <dbReference type="ChEBI" id="CHEBI:58349"/>
    </ligand>
</feature>
<feature type="binding site" evidence="1">
    <location>
        <position position="132"/>
    </location>
    <ligand>
        <name>NADP(+)</name>
        <dbReference type="ChEBI" id="CHEBI:58349"/>
    </ligand>
</feature>
<organism>
    <name type="scientific">Macrophomina phaseolina (strain MS6)</name>
    <name type="common">Charcoal rot fungus</name>
    <dbReference type="NCBI Taxonomy" id="1126212"/>
    <lineage>
        <taxon>Eukaryota</taxon>
        <taxon>Fungi</taxon>
        <taxon>Dikarya</taxon>
        <taxon>Ascomycota</taxon>
        <taxon>Pezizomycotina</taxon>
        <taxon>Dothideomycetes</taxon>
        <taxon>Dothideomycetes incertae sedis</taxon>
        <taxon>Botryosphaeriales</taxon>
        <taxon>Botryosphaeriaceae</taxon>
        <taxon>Macrophomina</taxon>
    </lineage>
</organism>
<gene>
    <name evidence="4" type="primary">dpmpG</name>
    <name type="ORF">MPH_09198</name>
</gene>
<proteinExistence type="evidence at protein level"/>
<evidence type="ECO:0000250" key="1">
    <source>
        <dbReference type="UniProtKB" id="L0E2Z4"/>
    </source>
</evidence>
<evidence type="ECO:0000250" key="2">
    <source>
        <dbReference type="UniProtKB" id="O93868"/>
    </source>
</evidence>
<evidence type="ECO:0000269" key="3">
    <source>
    </source>
</evidence>
<evidence type="ECO:0000303" key="4">
    <source>
    </source>
</evidence>
<evidence type="ECO:0000305" key="5"/>
<evidence type="ECO:0000305" key="6">
    <source>
    </source>
</evidence>
<name>DPMPG_MACPH</name>
<sequence>MSASSTEATNLAGKTCLITGGAGGLGRALAAAFLRAGANVAICDLNEERLKQASAELSGTGAGSLLAANADVADPAAAQQLFDRITAKFRTVDVLVNNAAIMDRFDPVADLDHELWDRVISVNLAGPFIFSKLALRVMLQQPKPDGCILNIASGAAKGGWLAGRCDLGLARICRG</sequence>